<reference key="1">
    <citation type="journal article" date="2007" name="J. Bacteriol.">
        <title>Genome sequence of Avery's virulent serotype 2 strain D39 of Streptococcus pneumoniae and comparison with that of unencapsulated laboratory strain R6.</title>
        <authorList>
            <person name="Lanie J.A."/>
            <person name="Ng W.-L."/>
            <person name="Kazmierczak K.M."/>
            <person name="Andrzejewski T.M."/>
            <person name="Davidsen T.M."/>
            <person name="Wayne K.J."/>
            <person name="Tettelin H."/>
            <person name="Glass J.I."/>
            <person name="Winkler M.E."/>
        </authorList>
    </citation>
    <scope>NUCLEOTIDE SEQUENCE [LARGE SCALE GENOMIC DNA]</scope>
    <source>
        <strain>D39 / NCTC 7466</strain>
    </source>
</reference>
<dbReference type="EC" id="6.1.1.7" evidence="1"/>
<dbReference type="EMBL" id="CP000410">
    <property type="protein sequence ID" value="ABJ53909.1"/>
    <property type="molecule type" value="Genomic_DNA"/>
</dbReference>
<dbReference type="RefSeq" id="WP_000811755.1">
    <property type="nucleotide sequence ID" value="NZ_JAMLJR010000005.1"/>
</dbReference>
<dbReference type="SMR" id="Q04JW5"/>
<dbReference type="PaxDb" id="373153-SPD_1216"/>
<dbReference type="KEGG" id="spd:SPD_1216"/>
<dbReference type="eggNOG" id="COG0013">
    <property type="taxonomic scope" value="Bacteria"/>
</dbReference>
<dbReference type="HOGENOM" id="CLU_004485_1_1_9"/>
<dbReference type="BioCyc" id="SPNE373153:G1G6V-1315-MONOMER"/>
<dbReference type="Proteomes" id="UP000001452">
    <property type="component" value="Chromosome"/>
</dbReference>
<dbReference type="GO" id="GO:0005829">
    <property type="term" value="C:cytosol"/>
    <property type="evidence" value="ECO:0007669"/>
    <property type="project" value="TreeGrafter"/>
</dbReference>
<dbReference type="GO" id="GO:0004813">
    <property type="term" value="F:alanine-tRNA ligase activity"/>
    <property type="evidence" value="ECO:0007669"/>
    <property type="project" value="UniProtKB-UniRule"/>
</dbReference>
<dbReference type="GO" id="GO:0002161">
    <property type="term" value="F:aminoacyl-tRNA deacylase activity"/>
    <property type="evidence" value="ECO:0007669"/>
    <property type="project" value="TreeGrafter"/>
</dbReference>
<dbReference type="GO" id="GO:0005524">
    <property type="term" value="F:ATP binding"/>
    <property type="evidence" value="ECO:0007669"/>
    <property type="project" value="UniProtKB-UniRule"/>
</dbReference>
<dbReference type="GO" id="GO:0140096">
    <property type="term" value="F:catalytic activity, acting on a protein"/>
    <property type="evidence" value="ECO:0007669"/>
    <property type="project" value="UniProtKB-ARBA"/>
</dbReference>
<dbReference type="GO" id="GO:0016740">
    <property type="term" value="F:transferase activity"/>
    <property type="evidence" value="ECO:0007669"/>
    <property type="project" value="UniProtKB-ARBA"/>
</dbReference>
<dbReference type="GO" id="GO:0000049">
    <property type="term" value="F:tRNA binding"/>
    <property type="evidence" value="ECO:0007669"/>
    <property type="project" value="UniProtKB-KW"/>
</dbReference>
<dbReference type="GO" id="GO:0008270">
    <property type="term" value="F:zinc ion binding"/>
    <property type="evidence" value="ECO:0007669"/>
    <property type="project" value="UniProtKB-UniRule"/>
</dbReference>
<dbReference type="GO" id="GO:0006419">
    <property type="term" value="P:alanyl-tRNA aminoacylation"/>
    <property type="evidence" value="ECO:0007669"/>
    <property type="project" value="UniProtKB-UniRule"/>
</dbReference>
<dbReference type="CDD" id="cd00673">
    <property type="entry name" value="AlaRS_core"/>
    <property type="match status" value="1"/>
</dbReference>
<dbReference type="FunFam" id="3.10.310.40:FF:000001">
    <property type="entry name" value="Alanine--tRNA ligase"/>
    <property type="match status" value="1"/>
</dbReference>
<dbReference type="FunFam" id="3.30.54.20:FF:000001">
    <property type="entry name" value="Alanine--tRNA ligase"/>
    <property type="match status" value="1"/>
</dbReference>
<dbReference type="FunFam" id="3.30.930.10:FF:000046">
    <property type="entry name" value="Alanine--tRNA ligase"/>
    <property type="match status" value="1"/>
</dbReference>
<dbReference type="FunFam" id="3.30.980.10:FF:000004">
    <property type="entry name" value="Alanine--tRNA ligase, cytoplasmic"/>
    <property type="match status" value="1"/>
</dbReference>
<dbReference type="Gene3D" id="2.40.30.130">
    <property type="match status" value="1"/>
</dbReference>
<dbReference type="Gene3D" id="3.10.310.40">
    <property type="match status" value="1"/>
</dbReference>
<dbReference type="Gene3D" id="3.30.54.20">
    <property type="match status" value="1"/>
</dbReference>
<dbReference type="Gene3D" id="6.10.250.550">
    <property type="match status" value="1"/>
</dbReference>
<dbReference type="Gene3D" id="3.30.930.10">
    <property type="entry name" value="Bira Bifunctional Protein, Domain 2"/>
    <property type="match status" value="1"/>
</dbReference>
<dbReference type="Gene3D" id="3.30.980.10">
    <property type="entry name" value="Threonyl-trna Synthetase, Chain A, domain 2"/>
    <property type="match status" value="1"/>
</dbReference>
<dbReference type="HAMAP" id="MF_00036_B">
    <property type="entry name" value="Ala_tRNA_synth_B"/>
    <property type="match status" value="1"/>
</dbReference>
<dbReference type="InterPro" id="IPR045864">
    <property type="entry name" value="aa-tRNA-synth_II/BPL/LPL"/>
</dbReference>
<dbReference type="InterPro" id="IPR002318">
    <property type="entry name" value="Ala-tRNA-lgiase_IIc"/>
</dbReference>
<dbReference type="InterPro" id="IPR018162">
    <property type="entry name" value="Ala-tRNA-ligase_IIc_anticod-bd"/>
</dbReference>
<dbReference type="InterPro" id="IPR018165">
    <property type="entry name" value="Ala-tRNA-synth_IIc_core"/>
</dbReference>
<dbReference type="InterPro" id="IPR018164">
    <property type="entry name" value="Ala-tRNA-synth_IIc_N"/>
</dbReference>
<dbReference type="InterPro" id="IPR050058">
    <property type="entry name" value="Ala-tRNA_ligase"/>
</dbReference>
<dbReference type="InterPro" id="IPR023033">
    <property type="entry name" value="Ala_tRNA_ligase_euk/bac"/>
</dbReference>
<dbReference type="InterPro" id="IPR003156">
    <property type="entry name" value="DHHA1_dom"/>
</dbReference>
<dbReference type="InterPro" id="IPR018163">
    <property type="entry name" value="Thr/Ala-tRNA-synth_IIc_edit"/>
</dbReference>
<dbReference type="InterPro" id="IPR009000">
    <property type="entry name" value="Transl_B-barrel_sf"/>
</dbReference>
<dbReference type="InterPro" id="IPR012947">
    <property type="entry name" value="tRNA_SAD"/>
</dbReference>
<dbReference type="NCBIfam" id="TIGR00344">
    <property type="entry name" value="alaS"/>
    <property type="match status" value="1"/>
</dbReference>
<dbReference type="PANTHER" id="PTHR11777:SF9">
    <property type="entry name" value="ALANINE--TRNA LIGASE, CYTOPLASMIC"/>
    <property type="match status" value="1"/>
</dbReference>
<dbReference type="PANTHER" id="PTHR11777">
    <property type="entry name" value="ALANYL-TRNA SYNTHETASE"/>
    <property type="match status" value="1"/>
</dbReference>
<dbReference type="Pfam" id="PF02272">
    <property type="entry name" value="DHHA1"/>
    <property type="match status" value="1"/>
</dbReference>
<dbReference type="Pfam" id="PF01411">
    <property type="entry name" value="tRNA-synt_2c"/>
    <property type="match status" value="1"/>
</dbReference>
<dbReference type="Pfam" id="PF07973">
    <property type="entry name" value="tRNA_SAD"/>
    <property type="match status" value="1"/>
</dbReference>
<dbReference type="PRINTS" id="PR00980">
    <property type="entry name" value="TRNASYNTHALA"/>
</dbReference>
<dbReference type="SMART" id="SM00863">
    <property type="entry name" value="tRNA_SAD"/>
    <property type="match status" value="1"/>
</dbReference>
<dbReference type="SUPFAM" id="SSF55681">
    <property type="entry name" value="Class II aaRS and biotin synthetases"/>
    <property type="match status" value="1"/>
</dbReference>
<dbReference type="SUPFAM" id="SSF101353">
    <property type="entry name" value="Putative anticodon-binding domain of alanyl-tRNA synthetase (AlaRS)"/>
    <property type="match status" value="1"/>
</dbReference>
<dbReference type="SUPFAM" id="SSF55186">
    <property type="entry name" value="ThrRS/AlaRS common domain"/>
    <property type="match status" value="1"/>
</dbReference>
<dbReference type="SUPFAM" id="SSF50447">
    <property type="entry name" value="Translation proteins"/>
    <property type="match status" value="1"/>
</dbReference>
<dbReference type="PROSITE" id="PS50860">
    <property type="entry name" value="AA_TRNA_LIGASE_II_ALA"/>
    <property type="match status" value="1"/>
</dbReference>
<comment type="function">
    <text evidence="1">Catalyzes the attachment of alanine to tRNA(Ala) in a two-step reaction: alanine is first activated by ATP to form Ala-AMP and then transferred to the acceptor end of tRNA(Ala). Also edits incorrectly charged Ser-tRNA(Ala) and Gly-tRNA(Ala) via its editing domain.</text>
</comment>
<comment type="catalytic activity">
    <reaction evidence="1">
        <text>tRNA(Ala) + L-alanine + ATP = L-alanyl-tRNA(Ala) + AMP + diphosphate</text>
        <dbReference type="Rhea" id="RHEA:12540"/>
        <dbReference type="Rhea" id="RHEA-COMP:9657"/>
        <dbReference type="Rhea" id="RHEA-COMP:9923"/>
        <dbReference type="ChEBI" id="CHEBI:30616"/>
        <dbReference type="ChEBI" id="CHEBI:33019"/>
        <dbReference type="ChEBI" id="CHEBI:57972"/>
        <dbReference type="ChEBI" id="CHEBI:78442"/>
        <dbReference type="ChEBI" id="CHEBI:78497"/>
        <dbReference type="ChEBI" id="CHEBI:456215"/>
        <dbReference type="EC" id="6.1.1.7"/>
    </reaction>
</comment>
<comment type="cofactor">
    <cofactor evidence="1">
        <name>Zn(2+)</name>
        <dbReference type="ChEBI" id="CHEBI:29105"/>
    </cofactor>
    <text evidence="1">Binds 1 zinc ion per subunit.</text>
</comment>
<comment type="subcellular location">
    <subcellularLocation>
        <location evidence="1">Cytoplasm</location>
    </subcellularLocation>
</comment>
<comment type="domain">
    <text evidence="1">Consists of three domains; the N-terminal catalytic domain, the editing domain and the C-terminal C-Ala domain. The editing domain removes incorrectly charged amino acids, while the C-Ala domain, along with tRNA(Ala), serves as a bridge to cooperatively bring together the editing and aminoacylation centers thus stimulating deacylation of misacylated tRNAs.</text>
</comment>
<comment type="similarity">
    <text evidence="1">Belongs to the class-II aminoacyl-tRNA synthetase family.</text>
</comment>
<protein>
    <recommendedName>
        <fullName evidence="1">Alanine--tRNA ligase</fullName>
        <ecNumber evidence="1">6.1.1.7</ecNumber>
    </recommendedName>
    <alternativeName>
        <fullName evidence="1">Alanyl-tRNA synthetase</fullName>
        <shortName evidence="1">AlaRS</shortName>
    </alternativeName>
</protein>
<gene>
    <name evidence="1" type="primary">alaS</name>
    <name type="ordered locus">SPD_1216</name>
</gene>
<sequence>MKQLSSAQVRQMWLDFWATKGHSVEPSVSLVPVNDPTLLWINSGVATLKKYFDGTIIPENPRITNAQKAIRTNDIENVGKTARHHTMFEMLGNFSIGDYFRDEAITWAYELLTSPEWFDFPAEKLYMTYYPDDKDSYNRWIEVGVDPSHLIPIEDNFWEIGAGPSGPDTEIFFDRGEAFDPENIGLRLLAEDIENDRYIEIWNIVLSQFNADPAVPRSEYKELPHKNIDTGAGLERLVAVIQGAKTNFETDLFMPIIREVEKLSGKVYDQDGDNMSFKVIADHIRSLSFAIGDGALPGNEGRGYVLRRLLRRASMHGQKLGINEPFLYKLVPTVGKIMESYYPEVLEKRDFIEKIVKSEEESFARTLHSGQHFAQGIVADLKEKGQSVIAGQDVFKLYDTYGFPVELTEEIAEEAGMTVDREGFEAAMKEQQERARASAVKGGSMGMQNETLQNITVESVFNYNTSQLSSKLVAIVADNAEVGAVSEGTASLIFAETSFYAEMGGQVADYGQILDESGKIVATVTNVQKAPNGQALHTVEVLAPLALNQEYTLAIDSNRRHRVMKNHTATHLLHAALHNILGNHATQAGSLNEVEFLRFDFTHFQAVTAEELRAIEQQVNEKIWEALEVKTVETDIDTAKEMGAMALFGEKYGKEVRVVTIGDYSIELCGGTHVDNTSEIGLFKIVKEEGIGSGTRRILAVTGKEAFEAYREQEDALKAIAATLKAPQVKEVPHKVEGLQEQLRQLQKENAELKEKAAAAAAGDIFKDVKEVNGHRYIASQVSVSDAGALRTFADNWKQKDYSDLLVLVAAIGDKVNVLVASKTKDLHAGNLVKELAPIIDGRGGGKPDMAMAGGSNQPKIQELLDAVAGKL</sequence>
<organism>
    <name type="scientific">Streptococcus pneumoniae serotype 2 (strain D39 / NCTC 7466)</name>
    <dbReference type="NCBI Taxonomy" id="373153"/>
    <lineage>
        <taxon>Bacteria</taxon>
        <taxon>Bacillati</taxon>
        <taxon>Bacillota</taxon>
        <taxon>Bacilli</taxon>
        <taxon>Lactobacillales</taxon>
        <taxon>Streptococcaceae</taxon>
        <taxon>Streptococcus</taxon>
    </lineage>
</organism>
<accession>Q04JW5</accession>
<name>SYA_STRP2</name>
<feature type="chain" id="PRO_0000347821" description="Alanine--tRNA ligase">
    <location>
        <begin position="1"/>
        <end position="872"/>
    </location>
</feature>
<feature type="binding site" evidence="1">
    <location>
        <position position="567"/>
    </location>
    <ligand>
        <name>Zn(2+)</name>
        <dbReference type="ChEBI" id="CHEBI:29105"/>
    </ligand>
</feature>
<feature type="binding site" evidence="1">
    <location>
        <position position="571"/>
    </location>
    <ligand>
        <name>Zn(2+)</name>
        <dbReference type="ChEBI" id="CHEBI:29105"/>
    </ligand>
</feature>
<feature type="binding site" evidence="1">
    <location>
        <position position="669"/>
    </location>
    <ligand>
        <name>Zn(2+)</name>
        <dbReference type="ChEBI" id="CHEBI:29105"/>
    </ligand>
</feature>
<feature type="binding site" evidence="1">
    <location>
        <position position="673"/>
    </location>
    <ligand>
        <name>Zn(2+)</name>
        <dbReference type="ChEBI" id="CHEBI:29105"/>
    </ligand>
</feature>
<evidence type="ECO:0000255" key="1">
    <source>
        <dbReference type="HAMAP-Rule" id="MF_00036"/>
    </source>
</evidence>
<keyword id="KW-0030">Aminoacyl-tRNA synthetase</keyword>
<keyword id="KW-0067">ATP-binding</keyword>
<keyword id="KW-0963">Cytoplasm</keyword>
<keyword id="KW-0436">Ligase</keyword>
<keyword id="KW-0479">Metal-binding</keyword>
<keyword id="KW-0547">Nucleotide-binding</keyword>
<keyword id="KW-0648">Protein biosynthesis</keyword>
<keyword id="KW-1185">Reference proteome</keyword>
<keyword id="KW-0694">RNA-binding</keyword>
<keyword id="KW-0820">tRNA-binding</keyword>
<keyword id="KW-0862">Zinc</keyword>
<proteinExistence type="inferred from homology"/>